<sequence length="870" mass="96780">MMQITTDFVVLSSSPETSAIHFPPLPLGNSKITSLRDPSMSLSPSPAASPTASKRSTFFSTPPYSQFKTAHKTTQDASKERTTTTKTDENSASSENGCIRRGQKSQPISQVELQNIGQDNSENKENAPTKPKRARKKQEGSRTGTEKLKNKTISGKVTKTGMSKSRTSVIKPVKSKQGTCERNTGKDGCEKDNLQLELAMARRRDWTPTKNAANPVIDLDDEDDATNRPDGLGTLLSGYEYTGMAIASDRHKVLTNSGPTKRRRIELILTHHKQLVDSRVLPAKPKSLSEDDSVQNSEGEAPICAVSKPSKKPKPKTKRLTTLTARVTAPYDLSANSSDSTVQEILGTAEASTGAKPKSRRTKRKADESPEYKVPRTLFSPEDAVKSLDQQELVFGTCSQLQREDSPDMLRDTQIAVQESEKEFTRGMGRLSHTARYSSVLSRLATQRNLWSAAARDTEGQLADVEVVDLVDSPEASKFIVSSLNNEKGTEDHSFATYSSRSSEVLQAKALAPADAPIDEALPALTSHTVEQLEYEEPKNQPITRSKPPLPYYKGKTDLQLASEVRRYGLKPPKNREKLIELLEKCWVAKHGLDLQEAREELQSKTTAGMTFSTSEPKKVEQEPYPKQAKTATQSKITKARSQFRPNVPELTGKSRETNTTTAVVKEDKQNNPKPKLKERQPNPKRSFIDVEEIQDSEDEFLPSPSAILNEFLVSPPRKGKQSNKDTKQNRQELPTSTIPSSPSPKSSLARDSSLSPTRQTKKSRTIPPVSVKRDLLDLGEQITKAVRAQPRRKQNSNPVTTGTRKRPTWHEKILMYDPIYLEDFTSWLNTEGLALVDEDREVAIGFVRQWCESKGICCCFRVKKTSERF</sequence>
<feature type="chain" id="PRO_0000388028" description="Structure-specific endonuclease subunit slx4">
    <location>
        <begin position="1"/>
        <end position="870"/>
    </location>
</feature>
<feature type="region of interest" description="Disordered" evidence="2">
    <location>
        <begin position="16"/>
        <end position="187"/>
    </location>
</feature>
<feature type="region of interest" description="Disordered" evidence="2">
    <location>
        <begin position="280"/>
        <end position="321"/>
    </location>
</feature>
<feature type="region of interest" description="Disordered" evidence="2">
    <location>
        <begin position="347"/>
        <end position="371"/>
    </location>
</feature>
<feature type="region of interest" description="Disordered" evidence="2">
    <location>
        <begin position="535"/>
        <end position="554"/>
    </location>
</feature>
<feature type="region of interest" description="Disordered" evidence="2">
    <location>
        <begin position="605"/>
        <end position="688"/>
    </location>
</feature>
<feature type="region of interest" description="Disordered" evidence="2">
    <location>
        <begin position="714"/>
        <end position="770"/>
    </location>
</feature>
<feature type="compositionally biased region" description="Low complexity" evidence="2">
    <location>
        <begin position="38"/>
        <end position="56"/>
    </location>
</feature>
<feature type="compositionally biased region" description="Polar residues" evidence="2">
    <location>
        <begin position="57"/>
        <end position="68"/>
    </location>
</feature>
<feature type="compositionally biased region" description="Basic and acidic residues" evidence="2">
    <location>
        <begin position="73"/>
        <end position="89"/>
    </location>
</feature>
<feature type="compositionally biased region" description="Polar residues" evidence="2">
    <location>
        <begin position="104"/>
        <end position="120"/>
    </location>
</feature>
<feature type="compositionally biased region" description="Basic and acidic residues" evidence="2">
    <location>
        <begin position="137"/>
        <end position="149"/>
    </location>
</feature>
<feature type="compositionally biased region" description="Polar residues" evidence="2">
    <location>
        <begin position="151"/>
        <end position="168"/>
    </location>
</feature>
<feature type="compositionally biased region" description="Basic residues" evidence="2">
    <location>
        <begin position="309"/>
        <end position="319"/>
    </location>
</feature>
<feature type="compositionally biased region" description="Polar residues" evidence="2">
    <location>
        <begin position="605"/>
        <end position="615"/>
    </location>
</feature>
<feature type="compositionally biased region" description="Polar residues" evidence="2">
    <location>
        <begin position="630"/>
        <end position="645"/>
    </location>
</feature>
<feature type="compositionally biased region" description="Basic and acidic residues" evidence="2">
    <location>
        <begin position="665"/>
        <end position="682"/>
    </location>
</feature>
<feature type="compositionally biased region" description="Low complexity" evidence="2">
    <location>
        <begin position="734"/>
        <end position="758"/>
    </location>
</feature>
<organism>
    <name type="scientific">Emericella nidulans (strain FGSC A4 / ATCC 38163 / CBS 112.46 / NRRL 194 / M139)</name>
    <name type="common">Aspergillus nidulans</name>
    <dbReference type="NCBI Taxonomy" id="227321"/>
    <lineage>
        <taxon>Eukaryota</taxon>
        <taxon>Fungi</taxon>
        <taxon>Dikarya</taxon>
        <taxon>Ascomycota</taxon>
        <taxon>Pezizomycotina</taxon>
        <taxon>Eurotiomycetes</taxon>
        <taxon>Eurotiomycetidae</taxon>
        <taxon>Eurotiales</taxon>
        <taxon>Aspergillaceae</taxon>
        <taxon>Aspergillus</taxon>
        <taxon>Aspergillus subgen. Nidulantes</taxon>
    </lineage>
</organism>
<comment type="function">
    <text evidence="1">Regulatory subunit of the slx1-slx4 structure-specific endonuclease that resolves DNA secondary structures generated during DNA repair and recombination. Has endonuclease activity towards branched DNA substrates, introducing single-strand cuts in duplex DNA close to junctions with ss-DNA.</text>
</comment>
<comment type="subunit">
    <text evidence="1">Forms a heterodimer with slx1.</text>
</comment>
<comment type="subcellular location">
    <subcellularLocation>
        <location evidence="1">Nucleus</location>
    </subcellularLocation>
</comment>
<comment type="PTM">
    <text evidence="1">Phosphorylated in response to DNA damage.</text>
</comment>
<comment type="similarity">
    <text evidence="1">Belongs to the SLX4 family.</text>
</comment>
<proteinExistence type="inferred from homology"/>
<protein>
    <recommendedName>
        <fullName evidence="1">Structure-specific endonuclease subunit slx4</fullName>
    </recommendedName>
</protein>
<name>SLX4_EMENI</name>
<accession>Q5B4M1</accession>
<accession>C8V8C4</accession>
<reference key="1">
    <citation type="journal article" date="2005" name="Nature">
        <title>Sequencing of Aspergillus nidulans and comparative analysis with A. fumigatus and A. oryzae.</title>
        <authorList>
            <person name="Galagan J.E."/>
            <person name="Calvo S.E."/>
            <person name="Cuomo C."/>
            <person name="Ma L.-J."/>
            <person name="Wortman J.R."/>
            <person name="Batzoglou S."/>
            <person name="Lee S.-I."/>
            <person name="Bastuerkmen M."/>
            <person name="Spevak C.C."/>
            <person name="Clutterbuck J."/>
            <person name="Kapitonov V."/>
            <person name="Jurka J."/>
            <person name="Scazzocchio C."/>
            <person name="Farman M.L."/>
            <person name="Butler J."/>
            <person name="Purcell S."/>
            <person name="Harris S."/>
            <person name="Braus G.H."/>
            <person name="Draht O."/>
            <person name="Busch S."/>
            <person name="D'Enfert C."/>
            <person name="Bouchier C."/>
            <person name="Goldman G.H."/>
            <person name="Bell-Pedersen D."/>
            <person name="Griffiths-Jones S."/>
            <person name="Doonan J.H."/>
            <person name="Yu J."/>
            <person name="Vienken K."/>
            <person name="Pain A."/>
            <person name="Freitag M."/>
            <person name="Selker E.U."/>
            <person name="Archer D.B."/>
            <person name="Penalva M.A."/>
            <person name="Oakley B.R."/>
            <person name="Momany M."/>
            <person name="Tanaka T."/>
            <person name="Kumagai T."/>
            <person name="Asai K."/>
            <person name="Machida M."/>
            <person name="Nierman W.C."/>
            <person name="Denning D.W."/>
            <person name="Caddick M.X."/>
            <person name="Hynes M."/>
            <person name="Paoletti M."/>
            <person name="Fischer R."/>
            <person name="Miller B.L."/>
            <person name="Dyer P.S."/>
            <person name="Sachs M.S."/>
            <person name="Osmani S.A."/>
            <person name="Birren B.W."/>
        </authorList>
    </citation>
    <scope>NUCLEOTIDE SEQUENCE [LARGE SCALE GENOMIC DNA]</scope>
    <source>
        <strain>FGSC A4 / ATCC 38163 / CBS 112.46 / NRRL 194 / M139</strain>
    </source>
</reference>
<reference key="2">
    <citation type="journal article" date="2009" name="Fungal Genet. Biol.">
        <title>The 2008 update of the Aspergillus nidulans genome annotation: a community effort.</title>
        <authorList>
            <person name="Wortman J.R."/>
            <person name="Gilsenan J.M."/>
            <person name="Joardar V."/>
            <person name="Deegan J."/>
            <person name="Clutterbuck J."/>
            <person name="Andersen M.R."/>
            <person name="Archer D."/>
            <person name="Bencina M."/>
            <person name="Braus G."/>
            <person name="Coutinho P."/>
            <person name="von Dohren H."/>
            <person name="Doonan J."/>
            <person name="Driessen A.J."/>
            <person name="Durek P."/>
            <person name="Espeso E."/>
            <person name="Fekete E."/>
            <person name="Flipphi M."/>
            <person name="Estrada C.G."/>
            <person name="Geysens S."/>
            <person name="Goldman G."/>
            <person name="de Groot P.W."/>
            <person name="Hansen K."/>
            <person name="Harris S.D."/>
            <person name="Heinekamp T."/>
            <person name="Helmstaedt K."/>
            <person name="Henrissat B."/>
            <person name="Hofmann G."/>
            <person name="Homan T."/>
            <person name="Horio T."/>
            <person name="Horiuchi H."/>
            <person name="James S."/>
            <person name="Jones M."/>
            <person name="Karaffa L."/>
            <person name="Karanyi Z."/>
            <person name="Kato M."/>
            <person name="Keller N."/>
            <person name="Kelly D.E."/>
            <person name="Kiel J.A."/>
            <person name="Kim J.M."/>
            <person name="van der Klei I.J."/>
            <person name="Klis F.M."/>
            <person name="Kovalchuk A."/>
            <person name="Krasevec N."/>
            <person name="Kubicek C.P."/>
            <person name="Liu B."/>
            <person name="Maccabe A."/>
            <person name="Meyer V."/>
            <person name="Mirabito P."/>
            <person name="Miskei M."/>
            <person name="Mos M."/>
            <person name="Mullins J."/>
            <person name="Nelson D.R."/>
            <person name="Nielsen J."/>
            <person name="Oakley B.R."/>
            <person name="Osmani S.A."/>
            <person name="Pakula T."/>
            <person name="Paszewski A."/>
            <person name="Paulsen I."/>
            <person name="Pilsyk S."/>
            <person name="Pocsi I."/>
            <person name="Punt P.J."/>
            <person name="Ram A.F."/>
            <person name="Ren Q."/>
            <person name="Robellet X."/>
            <person name="Robson G."/>
            <person name="Seiboth B."/>
            <person name="van Solingen P."/>
            <person name="Specht T."/>
            <person name="Sun J."/>
            <person name="Taheri-Talesh N."/>
            <person name="Takeshita N."/>
            <person name="Ussery D."/>
            <person name="vanKuyk P.A."/>
            <person name="Visser H."/>
            <person name="van de Vondervoort P.J."/>
            <person name="de Vries R.P."/>
            <person name="Walton J."/>
            <person name="Xiang X."/>
            <person name="Xiong Y."/>
            <person name="Zeng A.P."/>
            <person name="Brandt B.W."/>
            <person name="Cornell M.J."/>
            <person name="van den Hondel C.A."/>
            <person name="Visser J."/>
            <person name="Oliver S.G."/>
            <person name="Turner G."/>
        </authorList>
    </citation>
    <scope>GENOME REANNOTATION</scope>
    <source>
        <strain>FGSC A4 / ATCC 38163 / CBS 112.46 / NRRL 194 / M139</strain>
    </source>
</reference>
<dbReference type="EMBL" id="AACD01000078">
    <property type="protein sequence ID" value="EAA60852.1"/>
    <property type="molecule type" value="Genomic_DNA"/>
</dbReference>
<dbReference type="EMBL" id="BN001303">
    <property type="protein sequence ID" value="CBF77366.1"/>
    <property type="molecule type" value="Genomic_DNA"/>
</dbReference>
<dbReference type="RefSeq" id="XP_662113.1">
    <property type="nucleotide sequence ID" value="XM_657021.1"/>
</dbReference>
<dbReference type="SMR" id="Q5B4M1"/>
<dbReference type="STRING" id="227321.Q5B4M1"/>
<dbReference type="EnsemblFungi" id="CBF77366">
    <property type="protein sequence ID" value="CBF77366"/>
    <property type="gene ID" value="ANIA_04509"/>
</dbReference>
<dbReference type="KEGG" id="ani:ANIA_04509"/>
<dbReference type="eggNOG" id="ENOG502S832">
    <property type="taxonomic scope" value="Eukaryota"/>
</dbReference>
<dbReference type="HOGENOM" id="CLU_016773_0_0_1"/>
<dbReference type="InParanoid" id="Q5B4M1"/>
<dbReference type="OMA" id="SICCLWK"/>
<dbReference type="OrthoDB" id="5349119at2759"/>
<dbReference type="Proteomes" id="UP000000560">
    <property type="component" value="Chromosome III"/>
</dbReference>
<dbReference type="GO" id="GO:0033557">
    <property type="term" value="C:Slx1-Slx4 complex"/>
    <property type="evidence" value="ECO:0007669"/>
    <property type="project" value="UniProtKB-UniRule"/>
</dbReference>
<dbReference type="GO" id="GO:0017108">
    <property type="term" value="F:5'-flap endonuclease activity"/>
    <property type="evidence" value="ECO:0007669"/>
    <property type="project" value="InterPro"/>
</dbReference>
<dbReference type="GO" id="GO:0006310">
    <property type="term" value="P:DNA recombination"/>
    <property type="evidence" value="ECO:0007669"/>
    <property type="project" value="UniProtKB-UniRule"/>
</dbReference>
<dbReference type="GO" id="GO:0006281">
    <property type="term" value="P:DNA repair"/>
    <property type="evidence" value="ECO:0007669"/>
    <property type="project" value="UniProtKB-UniRule"/>
</dbReference>
<dbReference type="GO" id="GO:0006260">
    <property type="term" value="P:DNA replication"/>
    <property type="evidence" value="ECO:0007669"/>
    <property type="project" value="InterPro"/>
</dbReference>
<dbReference type="HAMAP" id="MF_03110">
    <property type="entry name" value="Endonuc_su_Slx4"/>
    <property type="match status" value="1"/>
</dbReference>
<dbReference type="InterPro" id="IPR027784">
    <property type="entry name" value="Slx4_ascomycetes"/>
</dbReference>
<dbReference type="InterPro" id="IPR018574">
    <property type="entry name" value="Structure-sp_endonuc_su_Slx4"/>
</dbReference>
<dbReference type="Pfam" id="PF09494">
    <property type="entry name" value="Slx4"/>
    <property type="match status" value="1"/>
</dbReference>
<keyword id="KW-0227">DNA damage</keyword>
<keyword id="KW-0233">DNA recombination</keyword>
<keyword id="KW-0234">DNA repair</keyword>
<keyword id="KW-0539">Nucleus</keyword>
<keyword id="KW-0597">Phosphoprotein</keyword>
<keyword id="KW-1185">Reference proteome</keyword>
<evidence type="ECO:0000255" key="1">
    <source>
        <dbReference type="HAMAP-Rule" id="MF_03110"/>
    </source>
</evidence>
<evidence type="ECO:0000256" key="2">
    <source>
        <dbReference type="SAM" id="MobiDB-lite"/>
    </source>
</evidence>
<gene>
    <name type="primary">slx4</name>
    <name type="ORF">AN4509</name>
</gene>